<organism>
    <name type="scientific">Arabidopsis thaliana</name>
    <name type="common">Mouse-ear cress</name>
    <dbReference type="NCBI Taxonomy" id="3702"/>
    <lineage>
        <taxon>Eukaryota</taxon>
        <taxon>Viridiplantae</taxon>
        <taxon>Streptophyta</taxon>
        <taxon>Embryophyta</taxon>
        <taxon>Tracheophyta</taxon>
        <taxon>Spermatophyta</taxon>
        <taxon>Magnoliopsida</taxon>
        <taxon>eudicotyledons</taxon>
        <taxon>Gunneridae</taxon>
        <taxon>Pentapetalae</taxon>
        <taxon>rosids</taxon>
        <taxon>malvids</taxon>
        <taxon>Brassicales</taxon>
        <taxon>Brassicaceae</taxon>
        <taxon>Camelineae</taxon>
        <taxon>Arabidopsis</taxon>
    </lineage>
</organism>
<reference key="1">
    <citation type="journal article" date="1999" name="Nature">
        <title>Sequence and analysis of chromosome 2 of the plant Arabidopsis thaliana.</title>
        <authorList>
            <person name="Lin X."/>
            <person name="Kaul S."/>
            <person name="Rounsley S.D."/>
            <person name="Shea T.P."/>
            <person name="Benito M.-I."/>
            <person name="Town C.D."/>
            <person name="Fujii C.Y."/>
            <person name="Mason T.M."/>
            <person name="Bowman C.L."/>
            <person name="Barnstead M.E."/>
            <person name="Feldblyum T.V."/>
            <person name="Buell C.R."/>
            <person name="Ketchum K.A."/>
            <person name="Lee J.J."/>
            <person name="Ronning C.M."/>
            <person name="Koo H.L."/>
            <person name="Moffat K.S."/>
            <person name="Cronin L.A."/>
            <person name="Shen M."/>
            <person name="Pai G."/>
            <person name="Van Aken S."/>
            <person name="Umayam L."/>
            <person name="Tallon L.J."/>
            <person name="Gill J.E."/>
            <person name="Adams M.D."/>
            <person name="Carrera A.J."/>
            <person name="Creasy T.H."/>
            <person name="Goodman H.M."/>
            <person name="Somerville C.R."/>
            <person name="Copenhaver G.P."/>
            <person name="Preuss D."/>
            <person name="Nierman W.C."/>
            <person name="White O."/>
            <person name="Eisen J.A."/>
            <person name="Salzberg S.L."/>
            <person name="Fraser C.M."/>
            <person name="Venter J.C."/>
        </authorList>
    </citation>
    <scope>NUCLEOTIDE SEQUENCE [LARGE SCALE GENOMIC DNA]</scope>
    <source>
        <strain>cv. Columbia</strain>
    </source>
</reference>
<reference key="2">
    <citation type="journal article" date="2017" name="Plant J.">
        <title>Araport11: a complete reannotation of the Arabidopsis thaliana reference genome.</title>
        <authorList>
            <person name="Cheng C.Y."/>
            <person name="Krishnakumar V."/>
            <person name="Chan A.P."/>
            <person name="Thibaud-Nissen F."/>
            <person name="Schobel S."/>
            <person name="Town C.D."/>
        </authorList>
    </citation>
    <scope>GENOME REANNOTATION</scope>
    <source>
        <strain>cv. Columbia</strain>
    </source>
</reference>
<reference key="3">
    <citation type="journal article" date="2006" name="Plant Biotechnol. J.">
        <title>Simultaneous high-throughput recombinational cloning of open reading frames in closed and open configurations.</title>
        <authorList>
            <person name="Underwood B.A."/>
            <person name="Vanderhaeghen R."/>
            <person name="Whitford R."/>
            <person name="Town C.D."/>
            <person name="Hilson P."/>
        </authorList>
    </citation>
    <scope>NUCLEOTIDE SEQUENCE [LARGE SCALE MRNA]</scope>
    <source>
        <strain>cv. Columbia</strain>
    </source>
</reference>
<reference key="4">
    <citation type="journal article" date="2020" name="Nature">
        <title>RGF1 controls root meristem size through ROS signalling.</title>
        <authorList>
            <person name="Yamada M."/>
            <person name="Han X."/>
            <person name="Benfey P.N."/>
        </authorList>
    </citation>
    <scope>FUNCTION</scope>
    <scope>DISRUPTION PHENOTYPE</scope>
    <scope>INDUCTION BY RGF1 PEPTIDE</scope>
    <scope>TISSUE SPECIFICITY</scope>
    <source>
        <strain>cv. Columbia</strain>
    </source>
</reference>
<gene>
    <name evidence="3" type="primary">RITF1</name>
    <name evidence="5" type="ordered locus">At2g12646</name>
    <name evidence="6" type="ORF">T4E5</name>
</gene>
<name>RITF1_ARATH</name>
<protein>
    <recommendedName>
        <fullName evidence="3">Protein RGF1 INDUCIBLE TRANSCRIPTION FACTOR 1</fullName>
    </recommendedName>
</protein>
<keyword id="KW-0479">Metal-binding</keyword>
<keyword id="KW-0539">Nucleus</keyword>
<keyword id="KW-1185">Reference proteome</keyword>
<keyword id="KW-0862">Zinc</keyword>
<keyword id="KW-0863">Zinc-finger</keyword>
<evidence type="ECO:0000255" key="1">
    <source>
        <dbReference type="PROSITE-ProRule" id="PRU00024"/>
    </source>
</evidence>
<evidence type="ECO:0000269" key="2">
    <source>
    </source>
</evidence>
<evidence type="ECO:0000303" key="3">
    <source>
    </source>
</evidence>
<evidence type="ECO:0000305" key="4"/>
<evidence type="ECO:0000312" key="5">
    <source>
        <dbReference type="Araport" id="AT2G12646"/>
    </source>
</evidence>
<evidence type="ECO:0000312" key="6">
    <source>
        <dbReference type="EMBL" id="AC007295"/>
    </source>
</evidence>
<proteinExistence type="evidence at protein level"/>
<sequence>MGIQKPAWLDALYAEKFFVGCPYHETAKKNERNVCCLDCCTSLCPHCVPSHRFHRLLQVRRYVYHDVVRLEDLQKLIDCSNVQAYTINSAKVVFIKKRPQNRQFKGAGNYCTSCDRSLQEPYIHCSLGCKVDFVMKRYRDITPFLKPCHTLTLGPDYIIPQDLLTDDEVAAYETPRSTVVDGDESMSWSSASSDNNNAGAAAAYAATTTHVVRKKRTGFCLCAKSANSYKEVSEDPDDISACINRRKGVPQRSPLC</sequence>
<dbReference type="EMBL" id="AC007295">
    <property type="status" value="NOT_ANNOTATED_CDS"/>
    <property type="molecule type" value="Genomic_DNA"/>
</dbReference>
<dbReference type="EMBL" id="CP002685">
    <property type="protein sequence ID" value="AEC06206.1"/>
    <property type="molecule type" value="Genomic_DNA"/>
</dbReference>
<dbReference type="EMBL" id="CP002685">
    <property type="protein sequence ID" value="ANM62409.1"/>
    <property type="molecule type" value="Genomic_DNA"/>
</dbReference>
<dbReference type="EMBL" id="DQ487530">
    <property type="protein sequence ID" value="ABF59218.1"/>
    <property type="molecule type" value="mRNA"/>
</dbReference>
<dbReference type="RefSeq" id="NP_001031352.1">
    <property type="nucleotide sequence ID" value="NM_001036275.3"/>
</dbReference>
<dbReference type="RefSeq" id="NP_001324567.1">
    <property type="nucleotide sequence ID" value="NM_001335382.1"/>
</dbReference>
<dbReference type="IntAct" id="Q1G3Q4">
    <property type="interactions" value="14"/>
</dbReference>
<dbReference type="STRING" id="3702.Q1G3Q4"/>
<dbReference type="PaxDb" id="3702-AT2G12646.1"/>
<dbReference type="ProteomicsDB" id="189213"/>
<dbReference type="EnsemblPlants" id="AT2G12646.1">
    <property type="protein sequence ID" value="AT2G12646.1"/>
    <property type="gene ID" value="AT2G12646"/>
</dbReference>
<dbReference type="EnsemblPlants" id="AT2G12646.2">
    <property type="protein sequence ID" value="AT2G12646.2"/>
    <property type="gene ID" value="AT2G12646"/>
</dbReference>
<dbReference type="GeneID" id="3768403"/>
<dbReference type="Gramene" id="AT2G12646.1">
    <property type="protein sequence ID" value="AT2G12646.1"/>
    <property type="gene ID" value="AT2G12646"/>
</dbReference>
<dbReference type="Gramene" id="AT2G12646.2">
    <property type="protein sequence ID" value="AT2G12646.2"/>
    <property type="gene ID" value="AT2G12646"/>
</dbReference>
<dbReference type="KEGG" id="ath:AT2G12646"/>
<dbReference type="Araport" id="AT2G12646"/>
<dbReference type="TAIR" id="AT2G12646">
    <property type="gene designation" value="RITF1"/>
</dbReference>
<dbReference type="eggNOG" id="ENOG502R0ZN">
    <property type="taxonomic scope" value="Eukaryota"/>
</dbReference>
<dbReference type="HOGENOM" id="CLU_070437_3_0_1"/>
<dbReference type="InParanoid" id="Q1G3Q4"/>
<dbReference type="OMA" id="IMIMGIE"/>
<dbReference type="OrthoDB" id="1908108at2759"/>
<dbReference type="PhylomeDB" id="Q1G3Q4"/>
<dbReference type="PRO" id="PR:Q1G3Q4"/>
<dbReference type="Proteomes" id="UP000006548">
    <property type="component" value="Chromosome 2"/>
</dbReference>
<dbReference type="ExpressionAtlas" id="Q1G3Q4">
    <property type="expression patterns" value="baseline and differential"/>
</dbReference>
<dbReference type="GO" id="GO:0005634">
    <property type="term" value="C:nucleus"/>
    <property type="evidence" value="ECO:0007669"/>
    <property type="project" value="UniProtKB-SubCell"/>
</dbReference>
<dbReference type="GO" id="GO:0008270">
    <property type="term" value="F:zinc ion binding"/>
    <property type="evidence" value="ECO:0007669"/>
    <property type="project" value="UniProtKB-KW"/>
</dbReference>
<dbReference type="GO" id="GO:0010078">
    <property type="term" value="P:maintenance of root meristem identity"/>
    <property type="evidence" value="ECO:0000315"/>
    <property type="project" value="UniProtKB"/>
</dbReference>
<dbReference type="GO" id="GO:2000377">
    <property type="term" value="P:regulation of reactive oxygen species metabolic process"/>
    <property type="evidence" value="ECO:0000315"/>
    <property type="project" value="UniProtKB"/>
</dbReference>
<dbReference type="GO" id="GO:2000280">
    <property type="term" value="P:regulation of root development"/>
    <property type="evidence" value="ECO:0000315"/>
    <property type="project" value="UniProtKB"/>
</dbReference>
<dbReference type="GO" id="GO:0043434">
    <property type="term" value="P:response to peptide hormone"/>
    <property type="evidence" value="ECO:0000270"/>
    <property type="project" value="UniProtKB"/>
</dbReference>
<dbReference type="InterPro" id="IPR006734">
    <property type="entry name" value="PLATZ"/>
</dbReference>
<dbReference type="PANTHER" id="PTHR31065">
    <property type="entry name" value="PLATZ TRANSCRIPTION FACTOR FAMILY PROTEIN"/>
    <property type="match status" value="1"/>
</dbReference>
<dbReference type="PANTHER" id="PTHR31065:SF11">
    <property type="entry name" value="PROTEIN RGF1 INDUCIBLE TRANSCRIPTION FACTOR 1"/>
    <property type="match status" value="1"/>
</dbReference>
<dbReference type="Pfam" id="PF04640">
    <property type="entry name" value="PLATZ"/>
    <property type="match status" value="1"/>
</dbReference>
<feature type="chain" id="PRO_0000451978" description="Protein RGF1 INDUCIBLE TRANSCRIPTION FACTOR 1">
    <location>
        <begin position="1"/>
        <end position="256"/>
    </location>
</feature>
<feature type="zinc finger region" description="B box-type" evidence="1">
    <location>
        <begin position="21"/>
        <end position="59"/>
    </location>
</feature>
<comment type="function">
    <text evidence="2">Probable transcription factor that plays a central role in mediating RGF1 hormone peptide signaling leading to the production of reactive oxygen species (ROS) in roots to modulate meristem size and root growth, probably via oxidative post-translational modification of the transcription factor PLETHORA (e.g. PLT1 and PLT2).</text>
</comment>
<comment type="interaction">
    <interactant intactId="EBI-15193003">
        <id>Q1G3Q4</id>
    </interactant>
    <interactant intactId="EBI-15191905">
        <id>Q1G3I2</id>
        <label>MIP1A</label>
    </interactant>
    <organismsDiffer>false</organismsDiffer>
    <experiments>3</experiments>
</comment>
<comment type="subcellular location">
    <subcellularLocation>
        <location evidence="4">Nucleus</location>
    </subcellularLocation>
</comment>
<comment type="tissue specificity">
    <text evidence="2">Expressed predominantly in root meristematic zones.</text>
</comment>
<comment type="induction">
    <text evidence="2">Induced by RGF1 peptides.</text>
</comment>
<comment type="disruption phenotype">
    <text evidence="2">Small root meristem and low root growth rate.</text>
</comment>
<accession>Q1G3Q4</accession>
<accession>A0A178W1S1</accession>